<sequence>MRTERVSPLLALGILVAGLCSRVHCLPENVTPEEQHKVTSVDGHSLASSNTDFAFSLYKQLALKDPNKNVIFSPLSVSIALAFLSLGAHGPTVTEILEGLKFNLTETPETEIHQGFQHLLQTFNQPSNQLQLSVGNAIFVQEELKLLDKFIEDARVLYSSEAFPTNFRDPEAAKSLINDYVKNKTQGKIEELFKDLSPRTELVLVNYVYFKAQWKTRFDPKHTEKTEFHVSDNKTVEVPMMTLDLETPYFRDEELGCTLVELTYTSNDSALFILPDKGKMQDLEAKLTPEMLTRWRNSLQPRRIHELYLPKFSIKSNYELNDTLSQMGIKKIFTDADLSGITGTADLVVSQVVHGAALDVDEEGTEGAAATGIGIERTFLRIIVRVNRPFLIAVVLKDTQSIIFLGKVTNPSEA</sequence>
<keyword id="KW-0968">Cytoplasmic vesicle</keyword>
<keyword id="KW-0325">Glycoprotein</keyword>
<keyword id="KW-0646">Protease inhibitor</keyword>
<keyword id="KW-1185">Reference proteome</keyword>
<keyword id="KW-0964">Secreted</keyword>
<keyword id="KW-0722">Serine protease inhibitor</keyword>
<keyword id="KW-0732">Signal</keyword>
<evidence type="ECO:0000250" key="1"/>
<evidence type="ECO:0000250" key="2">
    <source>
        <dbReference type="UniProtKB" id="Q9TTE1"/>
    </source>
</evidence>
<evidence type="ECO:0000255" key="3"/>
<evidence type="ECO:0000312" key="4">
    <source>
        <dbReference type="EMBL" id="ABM55499.1"/>
    </source>
</evidence>
<protein>
    <recommendedName>
        <fullName>Serpin A3-6</fullName>
    </recommendedName>
</protein>
<comment type="function">
    <text evidence="2">Serine protease inhibitor.</text>
</comment>
<comment type="subunit">
    <text evidence="2">Homodimer.</text>
</comment>
<comment type="subcellular location">
    <subcellularLocation>
        <location evidence="2">Cytoplasmic vesicle</location>
        <location evidence="2">Secretory vesicle</location>
        <location evidence="2">Chromaffin granule</location>
    </subcellularLocation>
    <subcellularLocation>
        <location evidence="2">Secreted</location>
    </subcellularLocation>
</comment>
<comment type="similarity">
    <text evidence="3">Belongs to the serpin family.</text>
</comment>
<feature type="signal peptide" evidence="1">
    <location>
        <begin position="1"/>
        <end position="25"/>
    </location>
</feature>
<feature type="chain" id="PRO_0000401160" description="Serpin A3-6" evidence="3">
    <location>
        <begin position="26"/>
        <end position="414"/>
    </location>
</feature>
<feature type="site" description="Reactive bond" evidence="2">
    <location>
        <begin position="380"/>
        <end position="381"/>
    </location>
</feature>
<feature type="glycosylation site" description="N-linked (GlcNAc...) asparagine" evidence="3">
    <location>
        <position position="103"/>
    </location>
</feature>
<feature type="glycosylation site" description="N-linked (GlcNAc...) asparagine" evidence="3">
    <location>
        <position position="183"/>
    </location>
</feature>
<feature type="glycosylation site" description="N-linked (GlcNAc...) asparagine" evidence="3">
    <location>
        <position position="233"/>
    </location>
</feature>
<feature type="glycosylation site" description="N-linked (GlcNAc...) asparagine" evidence="3">
    <location>
        <position position="267"/>
    </location>
</feature>
<feature type="glycosylation site" description="N-linked (GlcNAc...) asparagine" evidence="3">
    <location>
        <position position="321"/>
    </location>
</feature>
<gene>
    <name evidence="4" type="primary">SERPINA3-6</name>
</gene>
<name>SPA36_BOVIN</name>
<proteinExistence type="inferred from homology"/>
<organism>
    <name type="scientific">Bos taurus</name>
    <name type="common">Bovine</name>
    <dbReference type="NCBI Taxonomy" id="9913"/>
    <lineage>
        <taxon>Eukaryota</taxon>
        <taxon>Metazoa</taxon>
        <taxon>Chordata</taxon>
        <taxon>Craniata</taxon>
        <taxon>Vertebrata</taxon>
        <taxon>Euteleostomi</taxon>
        <taxon>Mammalia</taxon>
        <taxon>Eutheria</taxon>
        <taxon>Laurasiatheria</taxon>
        <taxon>Artiodactyla</taxon>
        <taxon>Ruminantia</taxon>
        <taxon>Pecora</taxon>
        <taxon>Bovidae</taxon>
        <taxon>Bovinae</taxon>
        <taxon>Bos</taxon>
    </lineage>
</organism>
<accession>A2I7N2</accession>
<reference key="1">
    <citation type="journal article" date="2008" name="BMC Genomics">
        <title>An original SERPINA3 gene cluster: elucidation of genomic organization and gene expression in the Bos taurus 21q24 region.</title>
        <authorList>
            <person name="Pelissier P."/>
            <person name="Delourme D."/>
            <person name="Germot A."/>
            <person name="Blanchet X."/>
            <person name="Becila S."/>
            <person name="Maftah A."/>
            <person name="Leveziel H."/>
            <person name="Ouali A."/>
            <person name="Bremaud L."/>
        </authorList>
    </citation>
    <scope>NUCLEOTIDE SEQUENCE [GENOMIC DNA]</scope>
    <scope>NOMENCLATURE</scope>
</reference>
<dbReference type="EMBL" id="EF153629">
    <property type="protein sequence ID" value="ABM55499.1"/>
    <property type="molecule type" value="Genomic_DNA"/>
</dbReference>
<dbReference type="RefSeq" id="NP_001139774.1">
    <property type="nucleotide sequence ID" value="NM_001146302.1"/>
</dbReference>
<dbReference type="SMR" id="A2I7N2"/>
<dbReference type="FunCoup" id="A2I7N2">
    <property type="interactions" value="125"/>
</dbReference>
<dbReference type="MEROPS" id="I04.027"/>
<dbReference type="GlyCosmos" id="A2I7N2">
    <property type="glycosylation" value="5 sites, No reported glycans"/>
</dbReference>
<dbReference type="GlyGen" id="A2I7N2">
    <property type="glycosylation" value="5 sites"/>
</dbReference>
<dbReference type="GeneID" id="100272171"/>
<dbReference type="CTD" id="100272171"/>
<dbReference type="InParanoid" id="A2I7N2"/>
<dbReference type="Proteomes" id="UP000009136">
    <property type="component" value="Unplaced"/>
</dbReference>
<dbReference type="GO" id="GO:0042583">
    <property type="term" value="C:chromaffin granule"/>
    <property type="evidence" value="ECO:0007669"/>
    <property type="project" value="UniProtKB-SubCell"/>
</dbReference>
<dbReference type="GO" id="GO:0031410">
    <property type="term" value="C:cytoplasmic vesicle"/>
    <property type="evidence" value="ECO:0000250"/>
    <property type="project" value="UniProtKB"/>
</dbReference>
<dbReference type="GO" id="GO:0005615">
    <property type="term" value="C:extracellular space"/>
    <property type="evidence" value="ECO:0000250"/>
    <property type="project" value="UniProtKB"/>
</dbReference>
<dbReference type="GO" id="GO:0004867">
    <property type="term" value="F:serine-type endopeptidase inhibitor activity"/>
    <property type="evidence" value="ECO:0000250"/>
    <property type="project" value="UniProtKB"/>
</dbReference>
<dbReference type="CDD" id="cd19551">
    <property type="entry name" value="serpinA3_A1AC"/>
    <property type="match status" value="1"/>
</dbReference>
<dbReference type="FunFam" id="3.30.497.10:FF:000001">
    <property type="entry name" value="Serine protease inhibitor"/>
    <property type="match status" value="1"/>
</dbReference>
<dbReference type="FunFam" id="2.30.39.10:FF:000002">
    <property type="entry name" value="Serpin family D member 1"/>
    <property type="match status" value="1"/>
</dbReference>
<dbReference type="Gene3D" id="2.30.39.10">
    <property type="entry name" value="Alpha-1-antitrypsin, domain 1"/>
    <property type="match status" value="1"/>
</dbReference>
<dbReference type="Gene3D" id="3.30.497.10">
    <property type="entry name" value="Antithrombin, subunit I, domain 2"/>
    <property type="match status" value="1"/>
</dbReference>
<dbReference type="InterPro" id="IPR023795">
    <property type="entry name" value="Serpin_CS"/>
</dbReference>
<dbReference type="InterPro" id="IPR023796">
    <property type="entry name" value="Serpin_dom"/>
</dbReference>
<dbReference type="InterPro" id="IPR000215">
    <property type="entry name" value="Serpin_fam"/>
</dbReference>
<dbReference type="InterPro" id="IPR036186">
    <property type="entry name" value="Serpin_sf"/>
</dbReference>
<dbReference type="InterPro" id="IPR042178">
    <property type="entry name" value="Serpin_sf_1"/>
</dbReference>
<dbReference type="InterPro" id="IPR042185">
    <property type="entry name" value="Serpin_sf_2"/>
</dbReference>
<dbReference type="PANTHER" id="PTHR11461:SF145">
    <property type="entry name" value="ALPHA-1-ANTICHYMOTRYPSIN"/>
    <property type="match status" value="1"/>
</dbReference>
<dbReference type="PANTHER" id="PTHR11461">
    <property type="entry name" value="SERINE PROTEASE INHIBITOR, SERPIN"/>
    <property type="match status" value="1"/>
</dbReference>
<dbReference type="Pfam" id="PF00079">
    <property type="entry name" value="Serpin"/>
    <property type="match status" value="1"/>
</dbReference>
<dbReference type="SMART" id="SM00093">
    <property type="entry name" value="SERPIN"/>
    <property type="match status" value="1"/>
</dbReference>
<dbReference type="SUPFAM" id="SSF56574">
    <property type="entry name" value="Serpins"/>
    <property type="match status" value="1"/>
</dbReference>
<dbReference type="PROSITE" id="PS00284">
    <property type="entry name" value="SERPIN"/>
    <property type="match status" value="1"/>
</dbReference>